<feature type="chain" id="PRO_1000088176" description="4-hydroxybenzoate octaprenyltransferase">
    <location>
        <begin position="1"/>
        <end position="296"/>
    </location>
</feature>
<feature type="transmembrane region" description="Helical" evidence="1">
    <location>
        <begin position="28"/>
        <end position="48"/>
    </location>
</feature>
<feature type="transmembrane region" description="Helical" evidence="1">
    <location>
        <begin position="51"/>
        <end position="71"/>
    </location>
</feature>
<feature type="transmembrane region" description="Helical" evidence="1">
    <location>
        <begin position="102"/>
        <end position="122"/>
    </location>
</feature>
<feature type="transmembrane region" description="Helical" evidence="1">
    <location>
        <begin position="143"/>
        <end position="163"/>
    </location>
</feature>
<feature type="transmembrane region" description="Helical" evidence="1">
    <location>
        <begin position="174"/>
        <end position="194"/>
    </location>
</feature>
<feature type="transmembrane region" description="Helical" evidence="1">
    <location>
        <begin position="212"/>
        <end position="232"/>
    </location>
</feature>
<feature type="transmembrane region" description="Helical" evidence="1">
    <location>
        <begin position="233"/>
        <end position="253"/>
    </location>
</feature>
<feature type="transmembrane region" description="Helical" evidence="1">
    <location>
        <begin position="274"/>
        <end position="294"/>
    </location>
</feature>
<keyword id="KW-0997">Cell inner membrane</keyword>
<keyword id="KW-1003">Cell membrane</keyword>
<keyword id="KW-0460">Magnesium</keyword>
<keyword id="KW-0472">Membrane</keyword>
<keyword id="KW-0808">Transferase</keyword>
<keyword id="KW-0812">Transmembrane</keyword>
<keyword id="KW-1133">Transmembrane helix</keyword>
<keyword id="KW-0831">Ubiquinone biosynthesis</keyword>
<protein>
    <recommendedName>
        <fullName evidence="1">4-hydroxybenzoate octaprenyltransferase</fullName>
        <ecNumber evidence="1">2.5.1.39</ecNumber>
    </recommendedName>
    <alternativeName>
        <fullName evidence="1">4-HB polyprenyltransferase</fullName>
    </alternativeName>
</protein>
<evidence type="ECO:0000255" key="1">
    <source>
        <dbReference type="HAMAP-Rule" id="MF_01635"/>
    </source>
</evidence>
<name>UBIA_NEIM0</name>
<accession>A9M390</accession>
<proteinExistence type="inferred from homology"/>
<sequence length="296" mass="33199">MNPKSPLFLRLSDRLDVYLRLMRADKPIGTLLLLWPTYWALWLASDGIPDLAVLAAFTIGTFLMRSAGCVINDFADRDFDGAVERTKNRPFAQGRVKKKEALLLTAFLCLLAALCLIPLNHLTWLMSLPALFLALTYPFTKRFFPIPQLYLGLAFSFGIPMAFAAVGNSVPVEAWILFTANVLWTLAYDTVYAMADKEDDLKIGIKTSAVTFGRYDIAAVMLCHGGFTLLMAVLGAVIGAAWAYWTAIPIVLLLQYRQYAAIKSRVRQICFETFLANNRIGWVWFTAIFAHTFFAK</sequence>
<reference key="1">
    <citation type="journal article" date="2008" name="Genomics">
        <title>Characterization of ST-4821 complex, a unique Neisseria meningitidis clone.</title>
        <authorList>
            <person name="Peng J."/>
            <person name="Yang L."/>
            <person name="Yang F."/>
            <person name="Yang J."/>
            <person name="Yan Y."/>
            <person name="Nie H."/>
            <person name="Zhang X."/>
            <person name="Xiong Z."/>
            <person name="Jiang Y."/>
            <person name="Cheng F."/>
            <person name="Xu X."/>
            <person name="Chen S."/>
            <person name="Sun L."/>
            <person name="Li W."/>
            <person name="Shen Y."/>
            <person name="Shao Z."/>
            <person name="Liang X."/>
            <person name="Xu J."/>
            <person name="Jin Q."/>
        </authorList>
    </citation>
    <scope>NUCLEOTIDE SEQUENCE [LARGE SCALE GENOMIC DNA]</scope>
    <source>
        <strain>053442</strain>
    </source>
</reference>
<comment type="function">
    <text evidence="1">Catalyzes the prenylation of para-hydroxybenzoate (PHB) with an all-trans polyprenyl group. Mediates the second step in the final reaction sequence of ubiquinone-8 (UQ-8) biosynthesis, which is the condensation of the polyisoprenoid side chain with PHB, generating the first membrane-bound Q intermediate 3-octaprenyl-4-hydroxybenzoate.</text>
</comment>
<comment type="catalytic activity">
    <reaction evidence="1">
        <text>all-trans-octaprenyl diphosphate + 4-hydroxybenzoate = 4-hydroxy-3-(all-trans-octaprenyl)benzoate + diphosphate</text>
        <dbReference type="Rhea" id="RHEA:27782"/>
        <dbReference type="ChEBI" id="CHEBI:1617"/>
        <dbReference type="ChEBI" id="CHEBI:17879"/>
        <dbReference type="ChEBI" id="CHEBI:33019"/>
        <dbReference type="ChEBI" id="CHEBI:57711"/>
        <dbReference type="EC" id="2.5.1.39"/>
    </reaction>
</comment>
<comment type="cofactor">
    <cofactor evidence="1">
        <name>Mg(2+)</name>
        <dbReference type="ChEBI" id="CHEBI:18420"/>
    </cofactor>
</comment>
<comment type="pathway">
    <text evidence="1">Cofactor biosynthesis; ubiquinone biosynthesis.</text>
</comment>
<comment type="subcellular location">
    <subcellularLocation>
        <location evidence="1">Cell inner membrane</location>
        <topology evidence="1">Multi-pass membrane protein</topology>
    </subcellularLocation>
</comment>
<comment type="similarity">
    <text evidence="1">Belongs to the UbiA prenyltransferase family.</text>
</comment>
<organism>
    <name type="scientific">Neisseria meningitidis serogroup C (strain 053442)</name>
    <dbReference type="NCBI Taxonomy" id="374833"/>
    <lineage>
        <taxon>Bacteria</taxon>
        <taxon>Pseudomonadati</taxon>
        <taxon>Pseudomonadota</taxon>
        <taxon>Betaproteobacteria</taxon>
        <taxon>Neisseriales</taxon>
        <taxon>Neisseriaceae</taxon>
        <taxon>Neisseria</taxon>
    </lineage>
</organism>
<gene>
    <name evidence="1" type="primary">ubiA</name>
    <name type="ordered locus">NMCC_0695</name>
</gene>
<dbReference type="EC" id="2.5.1.39" evidence="1"/>
<dbReference type="EMBL" id="CP000381">
    <property type="protein sequence ID" value="ABX72890.1"/>
    <property type="molecule type" value="Genomic_DNA"/>
</dbReference>
<dbReference type="RefSeq" id="WP_002217638.1">
    <property type="nucleotide sequence ID" value="NC_010120.1"/>
</dbReference>
<dbReference type="SMR" id="A9M390"/>
<dbReference type="KEGG" id="nmn:NMCC_0695"/>
<dbReference type="HOGENOM" id="CLU_034879_1_0_4"/>
<dbReference type="UniPathway" id="UPA00232"/>
<dbReference type="Proteomes" id="UP000001177">
    <property type="component" value="Chromosome"/>
</dbReference>
<dbReference type="GO" id="GO:0005886">
    <property type="term" value="C:plasma membrane"/>
    <property type="evidence" value="ECO:0007669"/>
    <property type="project" value="UniProtKB-SubCell"/>
</dbReference>
<dbReference type="GO" id="GO:0008412">
    <property type="term" value="F:4-hydroxybenzoate polyprenyltransferase activity"/>
    <property type="evidence" value="ECO:0007669"/>
    <property type="project" value="UniProtKB-UniRule"/>
</dbReference>
<dbReference type="GO" id="GO:0006744">
    <property type="term" value="P:ubiquinone biosynthetic process"/>
    <property type="evidence" value="ECO:0007669"/>
    <property type="project" value="UniProtKB-UniRule"/>
</dbReference>
<dbReference type="CDD" id="cd13959">
    <property type="entry name" value="PT_UbiA_COQ2"/>
    <property type="match status" value="1"/>
</dbReference>
<dbReference type="FunFam" id="1.10.357.140:FF:000002">
    <property type="entry name" value="4-hydroxybenzoate octaprenyltransferase"/>
    <property type="match status" value="1"/>
</dbReference>
<dbReference type="FunFam" id="1.20.120.1780:FF:000001">
    <property type="entry name" value="4-hydroxybenzoate octaprenyltransferase"/>
    <property type="match status" value="1"/>
</dbReference>
<dbReference type="Gene3D" id="1.10.357.140">
    <property type="entry name" value="UbiA prenyltransferase"/>
    <property type="match status" value="1"/>
</dbReference>
<dbReference type="Gene3D" id="1.20.120.1780">
    <property type="entry name" value="UbiA prenyltransferase"/>
    <property type="match status" value="1"/>
</dbReference>
<dbReference type="HAMAP" id="MF_01635">
    <property type="entry name" value="UbiA"/>
    <property type="match status" value="1"/>
</dbReference>
<dbReference type="InterPro" id="IPR006370">
    <property type="entry name" value="HB_polyprenyltransferase-like"/>
</dbReference>
<dbReference type="InterPro" id="IPR039653">
    <property type="entry name" value="Prenyltransferase"/>
</dbReference>
<dbReference type="InterPro" id="IPR000537">
    <property type="entry name" value="UbiA_prenyltransferase"/>
</dbReference>
<dbReference type="InterPro" id="IPR030470">
    <property type="entry name" value="UbiA_prenylTrfase_CS"/>
</dbReference>
<dbReference type="InterPro" id="IPR044878">
    <property type="entry name" value="UbiA_sf"/>
</dbReference>
<dbReference type="NCBIfam" id="TIGR01474">
    <property type="entry name" value="ubiA_proteo"/>
    <property type="match status" value="1"/>
</dbReference>
<dbReference type="PANTHER" id="PTHR11048:SF28">
    <property type="entry name" value="4-HYDROXYBENZOATE POLYPRENYLTRANSFERASE, MITOCHONDRIAL"/>
    <property type="match status" value="1"/>
</dbReference>
<dbReference type="PANTHER" id="PTHR11048">
    <property type="entry name" value="PRENYLTRANSFERASES"/>
    <property type="match status" value="1"/>
</dbReference>
<dbReference type="Pfam" id="PF01040">
    <property type="entry name" value="UbiA"/>
    <property type="match status" value="1"/>
</dbReference>
<dbReference type="PROSITE" id="PS00943">
    <property type="entry name" value="UBIA"/>
    <property type="match status" value="1"/>
</dbReference>